<accession>Q8PR13</accession>
<evidence type="ECO:0000250" key="1"/>
<evidence type="ECO:0000305" key="2"/>
<organism>
    <name type="scientific">Xanthomonas axonopodis pv. citri (strain 306)</name>
    <dbReference type="NCBI Taxonomy" id="190486"/>
    <lineage>
        <taxon>Bacteria</taxon>
        <taxon>Pseudomonadati</taxon>
        <taxon>Pseudomonadota</taxon>
        <taxon>Gammaproteobacteria</taxon>
        <taxon>Lysobacterales</taxon>
        <taxon>Lysobacteraceae</taxon>
        <taxon>Xanthomonas</taxon>
    </lineage>
</organism>
<proteinExistence type="inferred from homology"/>
<dbReference type="EC" id="2.4.1.18"/>
<dbReference type="EMBL" id="AE008923">
    <property type="protein sequence ID" value="AAM35048.1"/>
    <property type="molecule type" value="Genomic_DNA"/>
</dbReference>
<dbReference type="SMR" id="Q8PR13"/>
<dbReference type="CAZy" id="CBM48">
    <property type="family name" value="Carbohydrate-Binding Module Family 48"/>
</dbReference>
<dbReference type="CAZy" id="GH13">
    <property type="family name" value="Glycoside Hydrolase Family 13"/>
</dbReference>
<dbReference type="KEGG" id="xac:XAC0156"/>
<dbReference type="eggNOG" id="COG0296">
    <property type="taxonomic scope" value="Bacteria"/>
</dbReference>
<dbReference type="HOGENOM" id="CLU_004245_3_2_6"/>
<dbReference type="UniPathway" id="UPA00164"/>
<dbReference type="Proteomes" id="UP000000576">
    <property type="component" value="Chromosome"/>
</dbReference>
<dbReference type="GO" id="GO:0005829">
    <property type="term" value="C:cytosol"/>
    <property type="evidence" value="ECO:0007669"/>
    <property type="project" value="TreeGrafter"/>
</dbReference>
<dbReference type="GO" id="GO:0003844">
    <property type="term" value="F:1,4-alpha-glucan branching enzyme activity"/>
    <property type="evidence" value="ECO:0007669"/>
    <property type="project" value="UniProtKB-UniRule"/>
</dbReference>
<dbReference type="GO" id="GO:0043169">
    <property type="term" value="F:cation binding"/>
    <property type="evidence" value="ECO:0007669"/>
    <property type="project" value="InterPro"/>
</dbReference>
<dbReference type="GO" id="GO:0004553">
    <property type="term" value="F:hydrolase activity, hydrolyzing O-glycosyl compounds"/>
    <property type="evidence" value="ECO:0007669"/>
    <property type="project" value="InterPro"/>
</dbReference>
<dbReference type="GO" id="GO:0005978">
    <property type="term" value="P:glycogen biosynthetic process"/>
    <property type="evidence" value="ECO:0007669"/>
    <property type="project" value="UniProtKB-UniRule"/>
</dbReference>
<dbReference type="CDD" id="cd11322">
    <property type="entry name" value="AmyAc_Glg_BE"/>
    <property type="match status" value="1"/>
</dbReference>
<dbReference type="CDD" id="cd02855">
    <property type="entry name" value="E_set_GBE_prok_N"/>
    <property type="match status" value="1"/>
</dbReference>
<dbReference type="FunFam" id="2.60.40.10:FF:000169">
    <property type="entry name" value="1,4-alpha-glucan branching enzyme GlgB"/>
    <property type="match status" value="1"/>
</dbReference>
<dbReference type="FunFam" id="2.60.40.1180:FF:000002">
    <property type="entry name" value="1,4-alpha-glucan branching enzyme GlgB"/>
    <property type="match status" value="1"/>
</dbReference>
<dbReference type="FunFam" id="3.20.20.80:FF:000003">
    <property type="entry name" value="1,4-alpha-glucan branching enzyme GlgB"/>
    <property type="match status" value="1"/>
</dbReference>
<dbReference type="Gene3D" id="3.20.20.80">
    <property type="entry name" value="Glycosidases"/>
    <property type="match status" value="1"/>
</dbReference>
<dbReference type="Gene3D" id="2.60.40.1180">
    <property type="entry name" value="Golgi alpha-mannosidase II"/>
    <property type="match status" value="1"/>
</dbReference>
<dbReference type="Gene3D" id="2.60.40.10">
    <property type="entry name" value="Immunoglobulins"/>
    <property type="match status" value="2"/>
</dbReference>
<dbReference type="HAMAP" id="MF_00685">
    <property type="entry name" value="GlgB"/>
    <property type="match status" value="1"/>
</dbReference>
<dbReference type="InterPro" id="IPR006048">
    <property type="entry name" value="A-amylase/branching_C"/>
</dbReference>
<dbReference type="InterPro" id="IPR037439">
    <property type="entry name" value="Branching_enzy"/>
</dbReference>
<dbReference type="InterPro" id="IPR006407">
    <property type="entry name" value="GlgB"/>
</dbReference>
<dbReference type="InterPro" id="IPR054169">
    <property type="entry name" value="GlgB_N"/>
</dbReference>
<dbReference type="InterPro" id="IPR044143">
    <property type="entry name" value="GlgB_N_E_set_prok"/>
</dbReference>
<dbReference type="InterPro" id="IPR006047">
    <property type="entry name" value="Glyco_hydro_13_cat_dom"/>
</dbReference>
<dbReference type="InterPro" id="IPR004193">
    <property type="entry name" value="Glyco_hydro_13_N"/>
</dbReference>
<dbReference type="InterPro" id="IPR013780">
    <property type="entry name" value="Glyco_hydro_b"/>
</dbReference>
<dbReference type="InterPro" id="IPR017853">
    <property type="entry name" value="Glycoside_hydrolase_SF"/>
</dbReference>
<dbReference type="InterPro" id="IPR013783">
    <property type="entry name" value="Ig-like_fold"/>
</dbReference>
<dbReference type="InterPro" id="IPR014756">
    <property type="entry name" value="Ig_E-set"/>
</dbReference>
<dbReference type="NCBIfam" id="TIGR01515">
    <property type="entry name" value="branching_enzym"/>
    <property type="match status" value="1"/>
</dbReference>
<dbReference type="NCBIfam" id="NF003811">
    <property type="entry name" value="PRK05402.1"/>
    <property type="match status" value="1"/>
</dbReference>
<dbReference type="NCBIfam" id="NF008967">
    <property type="entry name" value="PRK12313.1"/>
    <property type="match status" value="1"/>
</dbReference>
<dbReference type="PANTHER" id="PTHR43651">
    <property type="entry name" value="1,4-ALPHA-GLUCAN-BRANCHING ENZYME"/>
    <property type="match status" value="1"/>
</dbReference>
<dbReference type="PANTHER" id="PTHR43651:SF3">
    <property type="entry name" value="1,4-ALPHA-GLUCAN-BRANCHING ENZYME"/>
    <property type="match status" value="1"/>
</dbReference>
<dbReference type="Pfam" id="PF00128">
    <property type="entry name" value="Alpha-amylase"/>
    <property type="match status" value="1"/>
</dbReference>
<dbReference type="Pfam" id="PF02806">
    <property type="entry name" value="Alpha-amylase_C"/>
    <property type="match status" value="1"/>
</dbReference>
<dbReference type="Pfam" id="PF02922">
    <property type="entry name" value="CBM_48"/>
    <property type="match status" value="1"/>
</dbReference>
<dbReference type="Pfam" id="PF22019">
    <property type="entry name" value="GlgB_N"/>
    <property type="match status" value="1"/>
</dbReference>
<dbReference type="PIRSF" id="PIRSF000463">
    <property type="entry name" value="GlgB"/>
    <property type="match status" value="1"/>
</dbReference>
<dbReference type="SMART" id="SM00642">
    <property type="entry name" value="Aamy"/>
    <property type="match status" value="1"/>
</dbReference>
<dbReference type="SUPFAM" id="SSF51445">
    <property type="entry name" value="(Trans)glycosidases"/>
    <property type="match status" value="1"/>
</dbReference>
<dbReference type="SUPFAM" id="SSF81296">
    <property type="entry name" value="E set domains"/>
    <property type="match status" value="1"/>
</dbReference>
<dbReference type="SUPFAM" id="SSF51011">
    <property type="entry name" value="Glycosyl hydrolase domain"/>
    <property type="match status" value="1"/>
</dbReference>
<sequence>MSNRWDSGVVRALAEARHGDAFAVLGAHPSDKGRLLRTYLPGADRVGAVLDDGQVVALDAGPEPGLFAGELPAHGGYRLRIGWPGGEQETADPYAFGPQLSDFDLHLISEGHHLQLADALGANVVEVEGVRGTRFAVWAPNASRVAVVGDFNSWDARRHPMRLRHQSGVWELFVPDVGPGAHYKYQLRGPHGHELPAKADPVARRAELAPGTASIVADPTPHQWSDDGWMATRARRQAHDAPMSIYEIHAGSWLREAGVDLDWDGLADRLIPYVADMGFTHVELMPVSEHPFGGSWGYQPLGLFAPTARFGTPDGFARFVDRCHREGIGVIVDWVPAHFPTDAHGLAHFDGTALYEHADPREGFHRDWNTLIYNHGRREVSGFLIASAMEFLQRYHVDGLRVDAVASMLYRDYSRNAGEWIPNIHGGRENYETIAFLRRLNEVVREHTPGAVMIAEESTAFPGVTAEVAHGGLGFHYKWNMGWMHDTLHYAGLDPIYRRYHHGELTFSMVYAYSERFVLPISHDEVVHGKGSLLGRMPGDDWQRFANLRAYLGFMFTHPGRKLLFMGCEFGQPTEWNHDAGLPWHLLDDPRHRGVQTLVRDLNRLYVQYPALHAHDDDPSGFAWVVGDDAGNSVVAFLRKGKRGDAPVLVVINFTPVVQHAYRIGVPQGGQWREVFNSDAGIYGGSNLGNGGSVTAEQQSMHGHAQSLPLLLPPLGAIVLTPYG</sequence>
<keyword id="KW-0119">Carbohydrate metabolism</keyword>
<keyword id="KW-0320">Glycogen biosynthesis</keyword>
<keyword id="KW-0321">Glycogen metabolism</keyword>
<keyword id="KW-0328">Glycosyltransferase</keyword>
<keyword id="KW-0808">Transferase</keyword>
<gene>
    <name type="primary">glgB1</name>
    <name type="ordered locus">XAC0156</name>
</gene>
<comment type="function">
    <text evidence="1">Catalyzes the formation of the alpha-1,6-glucosidic linkages in glycogen by scission of a 1,4-alpha-linked oligosaccharide from growing alpha-1,4-glucan chains and the subsequent attachment of the oligosaccharide to the alpha-1,6 position.</text>
</comment>
<comment type="catalytic activity">
    <reaction>
        <text>Transfers a segment of a (1-&gt;4)-alpha-D-glucan chain to a primary hydroxy group in a similar glucan chain.</text>
        <dbReference type="EC" id="2.4.1.18"/>
    </reaction>
</comment>
<comment type="pathway">
    <text>Glycan biosynthesis; glycogen biosynthesis.</text>
</comment>
<comment type="subunit">
    <text evidence="1">Monomer.</text>
</comment>
<comment type="similarity">
    <text evidence="2">Belongs to the glycosyl hydrolase 13 family. GlgB subfamily.</text>
</comment>
<name>GLGB1_XANAC</name>
<feature type="chain" id="PRO_0000188764" description="1,4-alpha-glucan branching enzyme GlgB 1">
    <location>
        <begin position="1"/>
        <end position="724"/>
    </location>
</feature>
<feature type="active site" description="Nucleophile" evidence="1">
    <location>
        <position position="403"/>
    </location>
</feature>
<feature type="active site" description="Proton donor" evidence="1">
    <location>
        <position position="456"/>
    </location>
</feature>
<protein>
    <recommendedName>
        <fullName>1,4-alpha-glucan branching enzyme GlgB 1</fullName>
        <ecNumber>2.4.1.18</ecNumber>
    </recommendedName>
    <alternativeName>
        <fullName>1,4-alpha-D-glucan:1,4-alpha-D-glucan 6-glucosyl-transferase 1</fullName>
    </alternativeName>
    <alternativeName>
        <fullName>Alpha-(1-&gt;4)-glucan branching enzyme 1</fullName>
    </alternativeName>
    <alternativeName>
        <fullName>Glycogen branching enzyme 1</fullName>
        <shortName>BE 1</shortName>
    </alternativeName>
</protein>
<reference key="1">
    <citation type="journal article" date="2002" name="Nature">
        <title>Comparison of the genomes of two Xanthomonas pathogens with differing host specificities.</title>
        <authorList>
            <person name="da Silva A.C.R."/>
            <person name="Ferro J.A."/>
            <person name="Reinach F.C."/>
            <person name="Farah C.S."/>
            <person name="Furlan L.R."/>
            <person name="Quaggio R.B."/>
            <person name="Monteiro-Vitorello C.B."/>
            <person name="Van Sluys M.A."/>
            <person name="Almeida N.F. Jr."/>
            <person name="Alves L.M.C."/>
            <person name="do Amaral A.M."/>
            <person name="Bertolini M.C."/>
            <person name="Camargo L.E.A."/>
            <person name="Camarotte G."/>
            <person name="Cannavan F."/>
            <person name="Cardozo J."/>
            <person name="Chambergo F."/>
            <person name="Ciapina L.P."/>
            <person name="Cicarelli R.M.B."/>
            <person name="Coutinho L.L."/>
            <person name="Cursino-Santos J.R."/>
            <person name="El-Dorry H."/>
            <person name="Faria J.B."/>
            <person name="Ferreira A.J.S."/>
            <person name="Ferreira R.C.C."/>
            <person name="Ferro M.I.T."/>
            <person name="Formighieri E.F."/>
            <person name="Franco M.C."/>
            <person name="Greggio C.C."/>
            <person name="Gruber A."/>
            <person name="Katsuyama A.M."/>
            <person name="Kishi L.T."/>
            <person name="Leite R.P."/>
            <person name="Lemos E.G.M."/>
            <person name="Lemos M.V.F."/>
            <person name="Locali E.C."/>
            <person name="Machado M.A."/>
            <person name="Madeira A.M.B.N."/>
            <person name="Martinez-Rossi N.M."/>
            <person name="Martins E.C."/>
            <person name="Meidanis J."/>
            <person name="Menck C.F.M."/>
            <person name="Miyaki C.Y."/>
            <person name="Moon D.H."/>
            <person name="Moreira L.M."/>
            <person name="Novo M.T.M."/>
            <person name="Okura V.K."/>
            <person name="Oliveira M.C."/>
            <person name="Oliveira V.R."/>
            <person name="Pereira H.A."/>
            <person name="Rossi A."/>
            <person name="Sena J.A.D."/>
            <person name="Silva C."/>
            <person name="de Souza R.F."/>
            <person name="Spinola L.A.F."/>
            <person name="Takita M.A."/>
            <person name="Tamura R.E."/>
            <person name="Teixeira E.C."/>
            <person name="Tezza R.I.D."/>
            <person name="Trindade dos Santos M."/>
            <person name="Truffi D."/>
            <person name="Tsai S.M."/>
            <person name="White F.F."/>
            <person name="Setubal J.C."/>
            <person name="Kitajima J.P."/>
        </authorList>
    </citation>
    <scope>NUCLEOTIDE SEQUENCE [LARGE SCALE GENOMIC DNA]</scope>
    <source>
        <strain>306</strain>
    </source>
</reference>